<accession>A9MN48</accession>
<protein>
    <recommendedName>
        <fullName evidence="1">Large ribosomal subunit protein uL4</fullName>
    </recommendedName>
    <alternativeName>
        <fullName evidence="3">50S ribosomal protein L4</fullName>
    </alternativeName>
</protein>
<evidence type="ECO:0000255" key="1">
    <source>
        <dbReference type="HAMAP-Rule" id="MF_01328"/>
    </source>
</evidence>
<evidence type="ECO:0000256" key="2">
    <source>
        <dbReference type="SAM" id="MobiDB-lite"/>
    </source>
</evidence>
<evidence type="ECO:0000305" key="3"/>
<organism>
    <name type="scientific">Salmonella arizonae (strain ATCC BAA-731 / CDC346-86 / RSK2980)</name>
    <dbReference type="NCBI Taxonomy" id="41514"/>
    <lineage>
        <taxon>Bacteria</taxon>
        <taxon>Pseudomonadati</taxon>
        <taxon>Pseudomonadota</taxon>
        <taxon>Gammaproteobacteria</taxon>
        <taxon>Enterobacterales</taxon>
        <taxon>Enterobacteriaceae</taxon>
        <taxon>Salmonella</taxon>
    </lineage>
</organism>
<feature type="chain" id="PRO_1000086534" description="Large ribosomal subunit protein uL4">
    <location>
        <begin position="1"/>
        <end position="201"/>
    </location>
</feature>
<feature type="region of interest" description="Disordered" evidence="2">
    <location>
        <begin position="44"/>
        <end position="71"/>
    </location>
</feature>
<dbReference type="EMBL" id="CP000880">
    <property type="protein sequence ID" value="ABX23977.1"/>
    <property type="molecule type" value="Genomic_DNA"/>
</dbReference>
<dbReference type="SMR" id="A9MN48"/>
<dbReference type="STRING" id="41514.SARI_04188"/>
<dbReference type="KEGG" id="ses:SARI_04188"/>
<dbReference type="HOGENOM" id="CLU_041575_5_2_6"/>
<dbReference type="Proteomes" id="UP000002084">
    <property type="component" value="Chromosome"/>
</dbReference>
<dbReference type="GO" id="GO:1990904">
    <property type="term" value="C:ribonucleoprotein complex"/>
    <property type="evidence" value="ECO:0007669"/>
    <property type="project" value="UniProtKB-KW"/>
</dbReference>
<dbReference type="GO" id="GO:0005840">
    <property type="term" value="C:ribosome"/>
    <property type="evidence" value="ECO:0007669"/>
    <property type="project" value="UniProtKB-KW"/>
</dbReference>
<dbReference type="GO" id="GO:0019843">
    <property type="term" value="F:rRNA binding"/>
    <property type="evidence" value="ECO:0007669"/>
    <property type="project" value="UniProtKB-UniRule"/>
</dbReference>
<dbReference type="GO" id="GO:0003735">
    <property type="term" value="F:structural constituent of ribosome"/>
    <property type="evidence" value="ECO:0007669"/>
    <property type="project" value="InterPro"/>
</dbReference>
<dbReference type="GO" id="GO:0006412">
    <property type="term" value="P:translation"/>
    <property type="evidence" value="ECO:0007669"/>
    <property type="project" value="UniProtKB-UniRule"/>
</dbReference>
<dbReference type="FunFam" id="3.40.1370.10:FF:000001">
    <property type="entry name" value="50S ribosomal protein L4"/>
    <property type="match status" value="1"/>
</dbReference>
<dbReference type="Gene3D" id="3.40.1370.10">
    <property type="match status" value="1"/>
</dbReference>
<dbReference type="HAMAP" id="MF_01328_B">
    <property type="entry name" value="Ribosomal_uL4_B"/>
    <property type="match status" value="1"/>
</dbReference>
<dbReference type="InterPro" id="IPR002136">
    <property type="entry name" value="Ribosomal_uL4"/>
</dbReference>
<dbReference type="InterPro" id="IPR013005">
    <property type="entry name" value="Ribosomal_uL4-like"/>
</dbReference>
<dbReference type="InterPro" id="IPR023574">
    <property type="entry name" value="Ribosomal_uL4_dom_sf"/>
</dbReference>
<dbReference type="NCBIfam" id="TIGR03953">
    <property type="entry name" value="rplD_bact"/>
    <property type="match status" value="1"/>
</dbReference>
<dbReference type="PANTHER" id="PTHR10746">
    <property type="entry name" value="50S RIBOSOMAL PROTEIN L4"/>
    <property type="match status" value="1"/>
</dbReference>
<dbReference type="PANTHER" id="PTHR10746:SF6">
    <property type="entry name" value="LARGE RIBOSOMAL SUBUNIT PROTEIN UL4M"/>
    <property type="match status" value="1"/>
</dbReference>
<dbReference type="Pfam" id="PF00573">
    <property type="entry name" value="Ribosomal_L4"/>
    <property type="match status" value="1"/>
</dbReference>
<dbReference type="SUPFAM" id="SSF52166">
    <property type="entry name" value="Ribosomal protein L4"/>
    <property type="match status" value="1"/>
</dbReference>
<proteinExistence type="inferred from homology"/>
<keyword id="KW-1185">Reference proteome</keyword>
<keyword id="KW-0687">Ribonucleoprotein</keyword>
<keyword id="KW-0689">Ribosomal protein</keyword>
<keyword id="KW-0694">RNA-binding</keyword>
<keyword id="KW-0699">rRNA-binding</keyword>
<sequence>MELVLKDAQSALTVSETTFGRDFNEALVHQVVVAYAAGARQGTRAQKTRAEVTGSGKKPWRQKGTGRARSGSIKSPIWRSGGVTFAARPQDHSQKVNKKMYRGALKSILSELVRQDRLIVVEKFSVEAPKTKLLAQKLKDMALEDVLIITGELDENLFLAARNLHKVDVRDATGIDPVSLIAFDKVVMTADAVKQVEEMLA</sequence>
<reference key="1">
    <citation type="submission" date="2007-11" db="EMBL/GenBank/DDBJ databases">
        <authorList>
            <consortium name="The Salmonella enterica serovar Arizonae Genome Sequencing Project"/>
            <person name="McClelland M."/>
            <person name="Sanderson E.K."/>
            <person name="Porwollik S."/>
            <person name="Spieth J."/>
            <person name="Clifton W.S."/>
            <person name="Fulton R."/>
            <person name="Chunyan W."/>
            <person name="Wollam A."/>
            <person name="Shah N."/>
            <person name="Pepin K."/>
            <person name="Bhonagiri V."/>
            <person name="Nash W."/>
            <person name="Johnson M."/>
            <person name="Thiruvilangam P."/>
            <person name="Wilson R."/>
        </authorList>
    </citation>
    <scope>NUCLEOTIDE SEQUENCE [LARGE SCALE GENOMIC DNA]</scope>
    <source>
        <strain>ATCC BAA-731 / CDC346-86 / RSK2980</strain>
    </source>
</reference>
<gene>
    <name evidence="1" type="primary">rplD</name>
    <name type="ordered locus">SARI_04188</name>
</gene>
<comment type="function">
    <text evidence="1">One of the primary rRNA binding proteins, this protein initially binds near the 5'-end of the 23S rRNA. It is important during the early stages of 50S assembly. It makes multiple contacts with different domains of the 23S rRNA in the assembled 50S subunit and ribosome.</text>
</comment>
<comment type="function">
    <text evidence="1">Forms part of the polypeptide exit tunnel.</text>
</comment>
<comment type="subunit">
    <text evidence="1">Part of the 50S ribosomal subunit.</text>
</comment>
<comment type="similarity">
    <text evidence="1">Belongs to the universal ribosomal protein uL4 family.</text>
</comment>
<name>RL4_SALAR</name>